<feature type="chain" id="PRO_1000185289" description="Ribosomal RNA large subunit methyltransferase E">
    <location>
        <begin position="1"/>
        <end position="201"/>
    </location>
</feature>
<feature type="active site" description="Proton acceptor" evidence="1">
    <location>
        <position position="141"/>
    </location>
</feature>
<feature type="binding site" evidence="1">
    <location>
        <position position="40"/>
    </location>
    <ligand>
        <name>S-adenosyl-L-methionine</name>
        <dbReference type="ChEBI" id="CHEBI:59789"/>
    </ligand>
</feature>
<feature type="binding site" evidence="1">
    <location>
        <position position="42"/>
    </location>
    <ligand>
        <name>S-adenosyl-L-methionine</name>
        <dbReference type="ChEBI" id="CHEBI:59789"/>
    </ligand>
</feature>
<feature type="binding site" evidence="1">
    <location>
        <position position="62"/>
    </location>
    <ligand>
        <name>S-adenosyl-L-methionine</name>
        <dbReference type="ChEBI" id="CHEBI:59789"/>
    </ligand>
</feature>
<feature type="binding site" evidence="1">
    <location>
        <position position="78"/>
    </location>
    <ligand>
        <name>S-adenosyl-L-methionine</name>
        <dbReference type="ChEBI" id="CHEBI:59789"/>
    </ligand>
</feature>
<feature type="binding site" evidence="1">
    <location>
        <position position="101"/>
    </location>
    <ligand>
        <name>S-adenosyl-L-methionine</name>
        <dbReference type="ChEBI" id="CHEBI:59789"/>
    </ligand>
</feature>
<reference key="1">
    <citation type="journal article" date="2009" name="BMC Genomics">
        <title>Conservation in the face of diversity: multistrain analysis of an intracellular bacterium.</title>
        <authorList>
            <person name="Dark M.J."/>
            <person name="Herndon D.R."/>
            <person name="Kappmeyer L.S."/>
            <person name="Gonzales M.P."/>
            <person name="Nordeen E."/>
            <person name="Palmer G.H."/>
            <person name="Knowles D.P. Jr."/>
            <person name="Brayton K.A."/>
        </authorList>
    </citation>
    <scope>NUCLEOTIDE SEQUENCE [LARGE SCALE GENOMIC DNA]</scope>
    <source>
        <strain>Florida</strain>
    </source>
</reference>
<accession>B9KIP4</accession>
<organism>
    <name type="scientific">Anaplasma marginale (strain Florida)</name>
    <dbReference type="NCBI Taxonomy" id="320483"/>
    <lineage>
        <taxon>Bacteria</taxon>
        <taxon>Pseudomonadati</taxon>
        <taxon>Pseudomonadota</taxon>
        <taxon>Alphaproteobacteria</taxon>
        <taxon>Rickettsiales</taxon>
        <taxon>Anaplasmataceae</taxon>
        <taxon>Anaplasma</taxon>
    </lineage>
</organism>
<dbReference type="EC" id="2.1.1.166" evidence="1"/>
<dbReference type="EMBL" id="CP001079">
    <property type="protein sequence ID" value="ACM49356.1"/>
    <property type="molecule type" value="Genomic_DNA"/>
</dbReference>
<dbReference type="RefSeq" id="WP_010264647.1">
    <property type="nucleotide sequence ID" value="NC_012026.1"/>
</dbReference>
<dbReference type="SMR" id="B9KIP4"/>
<dbReference type="STRING" id="320483.AMF_502"/>
<dbReference type="GeneID" id="7398249"/>
<dbReference type="KEGG" id="amf:AMF_502"/>
<dbReference type="eggNOG" id="COG0293">
    <property type="taxonomic scope" value="Bacteria"/>
</dbReference>
<dbReference type="HOGENOM" id="CLU_009422_4_0_5"/>
<dbReference type="Proteomes" id="UP000007307">
    <property type="component" value="Chromosome"/>
</dbReference>
<dbReference type="GO" id="GO:0005737">
    <property type="term" value="C:cytoplasm"/>
    <property type="evidence" value="ECO:0007669"/>
    <property type="project" value="UniProtKB-SubCell"/>
</dbReference>
<dbReference type="GO" id="GO:0008650">
    <property type="term" value="F:rRNA (uridine-2'-O-)-methyltransferase activity"/>
    <property type="evidence" value="ECO:0007669"/>
    <property type="project" value="UniProtKB-UniRule"/>
</dbReference>
<dbReference type="CDD" id="cd02440">
    <property type="entry name" value="AdoMet_MTases"/>
    <property type="match status" value="1"/>
</dbReference>
<dbReference type="Gene3D" id="3.40.50.150">
    <property type="entry name" value="Vaccinia Virus protein VP39"/>
    <property type="match status" value="1"/>
</dbReference>
<dbReference type="HAMAP" id="MF_01547">
    <property type="entry name" value="RNA_methyltr_E"/>
    <property type="match status" value="1"/>
</dbReference>
<dbReference type="InterPro" id="IPR050082">
    <property type="entry name" value="RNA_methyltr_RlmE"/>
</dbReference>
<dbReference type="InterPro" id="IPR002877">
    <property type="entry name" value="RNA_MeTrfase_FtsJ_dom"/>
</dbReference>
<dbReference type="InterPro" id="IPR015507">
    <property type="entry name" value="rRNA-MeTfrase_E"/>
</dbReference>
<dbReference type="InterPro" id="IPR029063">
    <property type="entry name" value="SAM-dependent_MTases_sf"/>
</dbReference>
<dbReference type="PANTHER" id="PTHR10920">
    <property type="entry name" value="RIBOSOMAL RNA METHYLTRANSFERASE"/>
    <property type="match status" value="1"/>
</dbReference>
<dbReference type="PANTHER" id="PTHR10920:SF18">
    <property type="entry name" value="RRNA METHYLTRANSFERASE 2, MITOCHONDRIAL"/>
    <property type="match status" value="1"/>
</dbReference>
<dbReference type="Pfam" id="PF01728">
    <property type="entry name" value="FtsJ"/>
    <property type="match status" value="1"/>
</dbReference>
<dbReference type="PIRSF" id="PIRSF005461">
    <property type="entry name" value="23S_rRNA_mtase"/>
    <property type="match status" value="1"/>
</dbReference>
<dbReference type="SUPFAM" id="SSF53335">
    <property type="entry name" value="S-adenosyl-L-methionine-dependent methyltransferases"/>
    <property type="match status" value="1"/>
</dbReference>
<protein>
    <recommendedName>
        <fullName evidence="1">Ribosomal RNA large subunit methyltransferase E</fullName>
        <ecNumber evidence="1">2.1.1.166</ecNumber>
    </recommendedName>
    <alternativeName>
        <fullName evidence="1">23S rRNA Um2552 methyltransferase</fullName>
    </alternativeName>
    <alternativeName>
        <fullName evidence="1">rRNA (uridine-2'-O-)-methyltransferase</fullName>
    </alternativeName>
</protein>
<comment type="function">
    <text evidence="1">Specifically methylates the uridine in position 2552 of 23S rRNA at the 2'-O position of the ribose in the fully assembled 50S ribosomal subunit.</text>
</comment>
<comment type="catalytic activity">
    <reaction evidence="1">
        <text>uridine(2552) in 23S rRNA + S-adenosyl-L-methionine = 2'-O-methyluridine(2552) in 23S rRNA + S-adenosyl-L-homocysteine + H(+)</text>
        <dbReference type="Rhea" id="RHEA:42720"/>
        <dbReference type="Rhea" id="RHEA-COMP:10202"/>
        <dbReference type="Rhea" id="RHEA-COMP:10203"/>
        <dbReference type="ChEBI" id="CHEBI:15378"/>
        <dbReference type="ChEBI" id="CHEBI:57856"/>
        <dbReference type="ChEBI" id="CHEBI:59789"/>
        <dbReference type="ChEBI" id="CHEBI:65315"/>
        <dbReference type="ChEBI" id="CHEBI:74478"/>
        <dbReference type="EC" id="2.1.1.166"/>
    </reaction>
</comment>
<comment type="subcellular location">
    <subcellularLocation>
        <location evidence="1">Cytoplasm</location>
    </subcellularLocation>
</comment>
<comment type="similarity">
    <text evidence="1">Belongs to the class I-like SAM-binding methyltransferase superfamily. RNA methyltransferase RlmE family.</text>
</comment>
<evidence type="ECO:0000255" key="1">
    <source>
        <dbReference type="HAMAP-Rule" id="MF_01547"/>
    </source>
</evidence>
<keyword id="KW-0963">Cytoplasm</keyword>
<keyword id="KW-0489">Methyltransferase</keyword>
<keyword id="KW-1185">Reference proteome</keyword>
<keyword id="KW-0698">rRNA processing</keyword>
<keyword id="KW-0949">S-adenosyl-L-methionine</keyword>
<keyword id="KW-0808">Transferase</keyword>
<sequence length="201" mass="22615">MLAKKHGYRSRSAYKLIDIDCKFKLLQRGRYVLDLGSCPGGWAQVAAERVAEGGKAHVVAVDMAPMERIPNVDFVQCDVEHSPELLRAALQDRKFDVVLSDMAPKSCGHRQVDHANIINLCEMALDLAVEFLRSGGSFVTKILQGEYEQEFRRSLQYYFASVTYFKPKSSRSESSEIYLVGTKFKNPEHPYGNSEDAPSEC</sequence>
<name>RLME_ANAMF</name>
<gene>
    <name evidence="1" type="primary">rlmE</name>
    <name evidence="1" type="synonym">ftsJ</name>
    <name evidence="1" type="synonym">rrmJ</name>
    <name type="ordered locus">AMF_502</name>
</gene>
<proteinExistence type="inferred from homology"/>